<evidence type="ECO:0000255" key="1">
    <source>
        <dbReference type="HAMAP-Rule" id="MF_00113"/>
    </source>
</evidence>
<accession>B0KPG6</accession>
<proteinExistence type="inferred from homology"/>
<gene>
    <name evidence="1" type="primary">queA</name>
    <name type="ordered locus">PputGB1_0875</name>
</gene>
<dbReference type="EC" id="2.4.99.17" evidence="1"/>
<dbReference type="EMBL" id="CP000926">
    <property type="protein sequence ID" value="ABY96785.1"/>
    <property type="molecule type" value="Genomic_DNA"/>
</dbReference>
<dbReference type="RefSeq" id="WP_012270583.1">
    <property type="nucleotide sequence ID" value="NC_010322.1"/>
</dbReference>
<dbReference type="SMR" id="B0KPG6"/>
<dbReference type="KEGG" id="ppg:PputGB1_0875"/>
<dbReference type="eggNOG" id="COG0809">
    <property type="taxonomic scope" value="Bacteria"/>
</dbReference>
<dbReference type="HOGENOM" id="CLU_039110_1_0_6"/>
<dbReference type="UniPathway" id="UPA00392"/>
<dbReference type="Proteomes" id="UP000002157">
    <property type="component" value="Chromosome"/>
</dbReference>
<dbReference type="GO" id="GO:0005737">
    <property type="term" value="C:cytoplasm"/>
    <property type="evidence" value="ECO:0007669"/>
    <property type="project" value="UniProtKB-SubCell"/>
</dbReference>
<dbReference type="GO" id="GO:0051075">
    <property type="term" value="F:S-adenosylmethionine:tRNA ribosyltransferase-isomerase activity"/>
    <property type="evidence" value="ECO:0007669"/>
    <property type="project" value="UniProtKB-EC"/>
</dbReference>
<dbReference type="GO" id="GO:0008616">
    <property type="term" value="P:queuosine biosynthetic process"/>
    <property type="evidence" value="ECO:0007669"/>
    <property type="project" value="UniProtKB-UniRule"/>
</dbReference>
<dbReference type="GO" id="GO:0002099">
    <property type="term" value="P:tRNA wobble guanine modification"/>
    <property type="evidence" value="ECO:0007669"/>
    <property type="project" value="TreeGrafter"/>
</dbReference>
<dbReference type="FunFam" id="2.40.10.240:FF:000001">
    <property type="entry name" value="S-adenosylmethionine:tRNA ribosyltransferase-isomerase"/>
    <property type="match status" value="1"/>
</dbReference>
<dbReference type="FunFam" id="3.40.1780.10:FF:000001">
    <property type="entry name" value="S-adenosylmethionine:tRNA ribosyltransferase-isomerase"/>
    <property type="match status" value="1"/>
</dbReference>
<dbReference type="Gene3D" id="2.40.10.240">
    <property type="entry name" value="QueA-like"/>
    <property type="match status" value="1"/>
</dbReference>
<dbReference type="Gene3D" id="3.40.1780.10">
    <property type="entry name" value="QueA-like"/>
    <property type="match status" value="1"/>
</dbReference>
<dbReference type="HAMAP" id="MF_00113">
    <property type="entry name" value="QueA"/>
    <property type="match status" value="1"/>
</dbReference>
<dbReference type="InterPro" id="IPR003699">
    <property type="entry name" value="QueA"/>
</dbReference>
<dbReference type="InterPro" id="IPR042118">
    <property type="entry name" value="QueA_dom1"/>
</dbReference>
<dbReference type="InterPro" id="IPR042119">
    <property type="entry name" value="QueA_dom2"/>
</dbReference>
<dbReference type="InterPro" id="IPR036100">
    <property type="entry name" value="QueA_sf"/>
</dbReference>
<dbReference type="NCBIfam" id="NF001140">
    <property type="entry name" value="PRK00147.1"/>
    <property type="match status" value="1"/>
</dbReference>
<dbReference type="NCBIfam" id="TIGR00113">
    <property type="entry name" value="queA"/>
    <property type="match status" value="1"/>
</dbReference>
<dbReference type="PANTHER" id="PTHR30307">
    <property type="entry name" value="S-ADENOSYLMETHIONINE:TRNA RIBOSYLTRANSFERASE-ISOMERASE"/>
    <property type="match status" value="1"/>
</dbReference>
<dbReference type="PANTHER" id="PTHR30307:SF0">
    <property type="entry name" value="S-ADENOSYLMETHIONINE:TRNA RIBOSYLTRANSFERASE-ISOMERASE"/>
    <property type="match status" value="1"/>
</dbReference>
<dbReference type="Pfam" id="PF02547">
    <property type="entry name" value="Queuosine_synth"/>
    <property type="match status" value="1"/>
</dbReference>
<dbReference type="SUPFAM" id="SSF111337">
    <property type="entry name" value="QueA-like"/>
    <property type="match status" value="1"/>
</dbReference>
<protein>
    <recommendedName>
        <fullName evidence="1">S-adenosylmethionine:tRNA ribosyltransferase-isomerase</fullName>
        <ecNumber evidence="1">2.4.99.17</ecNumber>
    </recommendedName>
    <alternativeName>
        <fullName evidence="1">Queuosine biosynthesis protein QueA</fullName>
    </alternativeName>
</protein>
<comment type="function">
    <text evidence="1">Transfers and isomerizes the ribose moiety from AdoMet to the 7-aminomethyl group of 7-deazaguanine (preQ1-tRNA) to give epoxyqueuosine (oQ-tRNA).</text>
</comment>
<comment type="catalytic activity">
    <reaction evidence="1">
        <text>7-aminomethyl-7-carbaguanosine(34) in tRNA + S-adenosyl-L-methionine = epoxyqueuosine(34) in tRNA + adenine + L-methionine + 2 H(+)</text>
        <dbReference type="Rhea" id="RHEA:32155"/>
        <dbReference type="Rhea" id="RHEA-COMP:10342"/>
        <dbReference type="Rhea" id="RHEA-COMP:18582"/>
        <dbReference type="ChEBI" id="CHEBI:15378"/>
        <dbReference type="ChEBI" id="CHEBI:16708"/>
        <dbReference type="ChEBI" id="CHEBI:57844"/>
        <dbReference type="ChEBI" id="CHEBI:59789"/>
        <dbReference type="ChEBI" id="CHEBI:82833"/>
        <dbReference type="ChEBI" id="CHEBI:194443"/>
        <dbReference type="EC" id="2.4.99.17"/>
    </reaction>
</comment>
<comment type="pathway">
    <text evidence="1">tRNA modification; tRNA-queuosine biosynthesis.</text>
</comment>
<comment type="subunit">
    <text evidence="1">Monomer.</text>
</comment>
<comment type="subcellular location">
    <subcellularLocation>
        <location evidence="1">Cytoplasm</location>
    </subcellularLocation>
</comment>
<comment type="similarity">
    <text evidence="1">Belongs to the QueA family.</text>
</comment>
<reference key="1">
    <citation type="submission" date="2008-01" db="EMBL/GenBank/DDBJ databases">
        <title>Complete sequence of Pseudomonas putida GB-1.</title>
        <authorList>
            <consortium name="US DOE Joint Genome Institute"/>
            <person name="Copeland A."/>
            <person name="Lucas S."/>
            <person name="Lapidus A."/>
            <person name="Barry K."/>
            <person name="Glavina del Rio T."/>
            <person name="Dalin E."/>
            <person name="Tice H."/>
            <person name="Pitluck S."/>
            <person name="Bruce D."/>
            <person name="Goodwin L."/>
            <person name="Chertkov O."/>
            <person name="Brettin T."/>
            <person name="Detter J.C."/>
            <person name="Han C."/>
            <person name="Kuske C.R."/>
            <person name="Schmutz J."/>
            <person name="Larimer F."/>
            <person name="Land M."/>
            <person name="Hauser L."/>
            <person name="Kyrpides N."/>
            <person name="Kim E."/>
            <person name="McCarthy J.K."/>
            <person name="Richardson P."/>
        </authorList>
    </citation>
    <scope>NUCLEOTIDE SEQUENCE [LARGE SCALE GENOMIC DNA]</scope>
    <source>
        <strain>GB-1</strain>
    </source>
</reference>
<sequence length="349" mass="38291">MRVADFSFELPDSLIARHPLAERHGSRLLVLDGPTGALSHRQFPDLLDYLRPGDLMVFNNTRVIPARLFGQKASGGKLEVLVERVLDSHRVLAHVRASKAPKVGAVILIDGGGEAEMVARHDTLFELRFTEEVLPLLDRVGHMPLPPYIDRPDEGADRERYQTVYAQRAGAVAAPTAGLHFDEALLEKIAAKGVERAFVTLHVGAGTFQPVRVDKIEDHHMHKEWLEVGQDVVDAIEACRARGGRVVAVGTTSVRSLESAARDGVLKAFSGDTDIFIYPGRPFHVVDALVTNFHLPESTLLMLVSAFAGYPETMAAYAAAVEHGYRFFSYGDAMFITRNPAPRGPEDQA</sequence>
<feature type="chain" id="PRO_1000076014" description="S-adenosylmethionine:tRNA ribosyltransferase-isomerase">
    <location>
        <begin position="1"/>
        <end position="349"/>
    </location>
</feature>
<keyword id="KW-0963">Cytoplasm</keyword>
<keyword id="KW-0671">Queuosine biosynthesis</keyword>
<keyword id="KW-0949">S-adenosyl-L-methionine</keyword>
<keyword id="KW-0808">Transferase</keyword>
<organism>
    <name type="scientific">Pseudomonas putida (strain GB-1)</name>
    <dbReference type="NCBI Taxonomy" id="76869"/>
    <lineage>
        <taxon>Bacteria</taxon>
        <taxon>Pseudomonadati</taxon>
        <taxon>Pseudomonadota</taxon>
        <taxon>Gammaproteobacteria</taxon>
        <taxon>Pseudomonadales</taxon>
        <taxon>Pseudomonadaceae</taxon>
        <taxon>Pseudomonas</taxon>
    </lineage>
</organism>
<name>QUEA_PSEPG</name>